<protein>
    <recommendedName>
        <fullName evidence="1">Glutamate--cysteine ligase</fullName>
        <ecNumber evidence="1">6.3.2.2</ecNumber>
    </recommendedName>
    <alternativeName>
        <fullName evidence="1">Gamma-ECS</fullName>
        <shortName evidence="1">GCS</shortName>
    </alternativeName>
    <alternativeName>
        <fullName evidence="1">Gamma-glutamylcysteine synthetase</fullName>
    </alternativeName>
</protein>
<evidence type="ECO:0000255" key="1">
    <source>
        <dbReference type="HAMAP-Rule" id="MF_00578"/>
    </source>
</evidence>
<accession>A9HYE0</accession>
<organism>
    <name type="scientific">Bordetella petrii (strain ATCC BAA-461 / DSM 12804 / CCUG 43448)</name>
    <dbReference type="NCBI Taxonomy" id="340100"/>
    <lineage>
        <taxon>Bacteria</taxon>
        <taxon>Pseudomonadati</taxon>
        <taxon>Pseudomonadota</taxon>
        <taxon>Betaproteobacteria</taxon>
        <taxon>Burkholderiales</taxon>
        <taxon>Alcaligenaceae</taxon>
        <taxon>Bordetella</taxon>
    </lineage>
</organism>
<name>GSH1_BORPD</name>
<dbReference type="EC" id="6.3.2.2" evidence="1"/>
<dbReference type="EMBL" id="AM902716">
    <property type="protein sequence ID" value="CAP40727.1"/>
    <property type="molecule type" value="Genomic_DNA"/>
</dbReference>
<dbReference type="SMR" id="A9HYE0"/>
<dbReference type="STRING" id="94624.Bpet0395"/>
<dbReference type="KEGG" id="bpt:Bpet0395"/>
<dbReference type="eggNOG" id="COG2918">
    <property type="taxonomic scope" value="Bacteria"/>
</dbReference>
<dbReference type="UniPathway" id="UPA00142">
    <property type="reaction ID" value="UER00209"/>
</dbReference>
<dbReference type="Proteomes" id="UP000001225">
    <property type="component" value="Chromosome"/>
</dbReference>
<dbReference type="GO" id="GO:0005829">
    <property type="term" value="C:cytosol"/>
    <property type="evidence" value="ECO:0007669"/>
    <property type="project" value="TreeGrafter"/>
</dbReference>
<dbReference type="GO" id="GO:0005524">
    <property type="term" value="F:ATP binding"/>
    <property type="evidence" value="ECO:0007669"/>
    <property type="project" value="UniProtKB-KW"/>
</dbReference>
<dbReference type="GO" id="GO:0004357">
    <property type="term" value="F:glutamate-cysteine ligase activity"/>
    <property type="evidence" value="ECO:0007669"/>
    <property type="project" value="UniProtKB-UniRule"/>
</dbReference>
<dbReference type="GO" id="GO:0046872">
    <property type="term" value="F:metal ion binding"/>
    <property type="evidence" value="ECO:0007669"/>
    <property type="project" value="TreeGrafter"/>
</dbReference>
<dbReference type="GO" id="GO:0006750">
    <property type="term" value="P:glutathione biosynthetic process"/>
    <property type="evidence" value="ECO:0007669"/>
    <property type="project" value="UniProtKB-UniRule"/>
</dbReference>
<dbReference type="Gene3D" id="3.30.590.20">
    <property type="match status" value="1"/>
</dbReference>
<dbReference type="HAMAP" id="MF_00578">
    <property type="entry name" value="Glu_cys_ligase"/>
    <property type="match status" value="1"/>
</dbReference>
<dbReference type="InterPro" id="IPR014746">
    <property type="entry name" value="Gln_synth/guanido_kin_cat_dom"/>
</dbReference>
<dbReference type="InterPro" id="IPR007370">
    <property type="entry name" value="Glu_cys_ligase"/>
</dbReference>
<dbReference type="InterPro" id="IPR006334">
    <property type="entry name" value="Glut_cys_ligase"/>
</dbReference>
<dbReference type="NCBIfam" id="TIGR01434">
    <property type="entry name" value="glu_cys_ligase"/>
    <property type="match status" value="1"/>
</dbReference>
<dbReference type="PANTHER" id="PTHR38761">
    <property type="entry name" value="GLUTAMATE--CYSTEINE LIGASE"/>
    <property type="match status" value="1"/>
</dbReference>
<dbReference type="PANTHER" id="PTHR38761:SF1">
    <property type="entry name" value="GLUTAMATE--CYSTEINE LIGASE"/>
    <property type="match status" value="1"/>
</dbReference>
<dbReference type="Pfam" id="PF04262">
    <property type="entry name" value="Glu_cys_ligase"/>
    <property type="match status" value="1"/>
</dbReference>
<dbReference type="SUPFAM" id="SSF55931">
    <property type="entry name" value="Glutamine synthetase/guanido kinase"/>
    <property type="match status" value="1"/>
</dbReference>
<keyword id="KW-0067">ATP-binding</keyword>
<keyword id="KW-0317">Glutathione biosynthesis</keyword>
<keyword id="KW-0436">Ligase</keyword>
<keyword id="KW-0547">Nucleotide-binding</keyword>
<comment type="catalytic activity">
    <reaction evidence="1">
        <text>L-cysteine + L-glutamate + ATP = gamma-L-glutamyl-L-cysteine + ADP + phosphate + H(+)</text>
        <dbReference type="Rhea" id="RHEA:13285"/>
        <dbReference type="ChEBI" id="CHEBI:15378"/>
        <dbReference type="ChEBI" id="CHEBI:29985"/>
        <dbReference type="ChEBI" id="CHEBI:30616"/>
        <dbReference type="ChEBI" id="CHEBI:35235"/>
        <dbReference type="ChEBI" id="CHEBI:43474"/>
        <dbReference type="ChEBI" id="CHEBI:58173"/>
        <dbReference type="ChEBI" id="CHEBI:456216"/>
        <dbReference type="EC" id="6.3.2.2"/>
    </reaction>
</comment>
<comment type="pathway">
    <text evidence="1">Sulfur metabolism; glutathione biosynthesis; glutathione from L-cysteine and L-glutamate: step 1/2.</text>
</comment>
<comment type="similarity">
    <text evidence="1">Belongs to the glutamate--cysteine ligase type 1 family. Type 1 subfamily.</text>
</comment>
<gene>
    <name evidence="1" type="primary">gshA</name>
    <name type="ordered locus">Bpet0395</name>
</gene>
<reference key="1">
    <citation type="journal article" date="2008" name="BMC Genomics">
        <title>The missing link: Bordetella petrii is endowed with both the metabolic versatility of environmental bacteria and virulence traits of pathogenic Bordetellae.</title>
        <authorList>
            <person name="Gross R."/>
            <person name="Guzman C.A."/>
            <person name="Sebaihia M."/>
            <person name="Martin dos Santos V.A.P."/>
            <person name="Pieper D.H."/>
            <person name="Koebnik R."/>
            <person name="Lechner M."/>
            <person name="Bartels D."/>
            <person name="Buhrmester J."/>
            <person name="Choudhuri J.V."/>
            <person name="Ebensen T."/>
            <person name="Gaigalat L."/>
            <person name="Herrmann S."/>
            <person name="Khachane A.N."/>
            <person name="Larisch C."/>
            <person name="Link S."/>
            <person name="Linke B."/>
            <person name="Meyer F."/>
            <person name="Mormann S."/>
            <person name="Nakunst D."/>
            <person name="Rueckert C."/>
            <person name="Schneiker-Bekel S."/>
            <person name="Schulze K."/>
            <person name="Voerholter F.-J."/>
            <person name="Yevsa T."/>
            <person name="Engle J.T."/>
            <person name="Goldman W.E."/>
            <person name="Puehler A."/>
            <person name="Goebel U.B."/>
            <person name="Goesmann A."/>
            <person name="Bloecker H."/>
            <person name="Kaiser O."/>
            <person name="Martinez-Arias R."/>
        </authorList>
    </citation>
    <scope>NUCLEOTIDE SEQUENCE [LARGE SCALE GENOMIC DNA]</scope>
    <source>
        <strain>ATCC BAA-461 / DSM 12804 / CCUG 43448</strain>
    </source>
</reference>
<sequence>MTVTDTAASRLSRLKAHADLLAQSLRGIEKEGLRVDAQGKLAVTPHPSGLGSALTNEHVTTDYSEALLELITGTHGRVEPLLAELENTHRFVYSVLDGEYIWNQSMPATLPPEADIPIAWYGRSNTGMLKHVYRRGLAERYGKAMQCIAGVHYNFSLPDALWEILDPGAADPQTRRSRGYIGLIRNFTRYSWLLMYLFGAAPALSRSFMGDRPHPLQALDADTLYLPHATSLRMSDLGYQNNKAQAQLKLCYNDLDTFLARLYGAVTQPWPEYQAIGTHRDGQWIQLNTNVLQIENEYYSSIRPKRATGRCERPVTALAERGVQYVEVRCLDIDPQQPVGIAADTARFVDAFLLFCAVSDSPYFPQNGYCQRSADNFSVVVKEGRKPGLMLDRDGVAISLPDWGRELLDHIAPYAALYDQALGGDAYARALQAQHAKLGHADDTPSARLLAELRDQGVPFHEYSLQLSRRHADALRAQPLPADVAAGYAEAARQSHAEQARLEQSDDVDFDTYVARYQAALKAPGSR</sequence>
<proteinExistence type="inferred from homology"/>
<feature type="chain" id="PRO_1000129586" description="Glutamate--cysteine ligase">
    <location>
        <begin position="1"/>
        <end position="527"/>
    </location>
</feature>